<feature type="chain" id="PRO_0000420480" description="E3 ubiquitin-protein ligase TRIM71">
    <location>
        <begin position="1"/>
        <end position="824"/>
    </location>
</feature>
<feature type="repeat" description="Filamin">
    <location>
        <begin position="435"/>
        <end position="536"/>
    </location>
</feature>
<feature type="repeat" description="NHL 1">
    <location>
        <begin position="549"/>
        <end position="592"/>
    </location>
</feature>
<feature type="repeat" description="NHL 2">
    <location>
        <begin position="596"/>
        <end position="639"/>
    </location>
</feature>
<feature type="repeat" description="NHL 3">
    <location>
        <begin position="643"/>
        <end position="686"/>
    </location>
</feature>
<feature type="repeat" description="NHL 4">
    <location>
        <begin position="690"/>
        <end position="733"/>
    </location>
</feature>
<feature type="repeat" description="NHL 5">
    <location>
        <begin position="737"/>
        <end position="780"/>
    </location>
</feature>
<feature type="repeat" description="NHL 6">
    <location>
        <begin position="784"/>
        <end position="824"/>
    </location>
</feature>
<feature type="zinc finger region" description="RING-type" evidence="5">
    <location>
        <begin position="23"/>
        <end position="93"/>
    </location>
</feature>
<feature type="zinc finger region" description="B box-type 1; atypical" evidence="4">
    <location>
        <begin position="147"/>
        <end position="194"/>
    </location>
</feature>
<feature type="zinc finger region" description="B box-type 2" evidence="4">
    <location>
        <begin position="229"/>
        <end position="270"/>
    </location>
</feature>
<feature type="region of interest" description="Disordered" evidence="6">
    <location>
        <begin position="37"/>
        <end position="56"/>
    </location>
</feature>
<feature type="coiled-coil region" evidence="3">
    <location>
        <begin position="293"/>
        <end position="321"/>
    </location>
</feature>
<feature type="binding site" evidence="4">
    <location>
        <position position="152"/>
    </location>
    <ligand>
        <name>Zn(2+)</name>
        <dbReference type="ChEBI" id="CHEBI:29105"/>
        <label>1</label>
    </ligand>
</feature>
<feature type="binding site" evidence="4">
    <location>
        <position position="155"/>
    </location>
    <ligand>
        <name>Zn(2+)</name>
        <dbReference type="ChEBI" id="CHEBI:29105"/>
        <label>1</label>
    </ligand>
</feature>
<feature type="binding site" evidence="4">
    <location>
        <position position="176"/>
    </location>
    <ligand>
        <name>Zn(2+)</name>
        <dbReference type="ChEBI" id="CHEBI:29105"/>
        <label>1</label>
    </ligand>
</feature>
<feature type="binding site" evidence="4">
    <location>
        <position position="180"/>
    </location>
    <ligand>
        <name>Zn(2+)</name>
        <dbReference type="ChEBI" id="CHEBI:29105"/>
        <label>1</label>
    </ligand>
</feature>
<feature type="binding site" evidence="4">
    <location>
        <position position="234"/>
    </location>
    <ligand>
        <name>Zn(2+)</name>
        <dbReference type="ChEBI" id="CHEBI:29105"/>
        <label>2</label>
    </ligand>
</feature>
<feature type="binding site" evidence="4">
    <location>
        <position position="237"/>
    </location>
    <ligand>
        <name>Zn(2+)</name>
        <dbReference type="ChEBI" id="CHEBI:29105"/>
        <label>2</label>
    </ligand>
</feature>
<feature type="binding site" evidence="4">
    <location>
        <position position="257"/>
    </location>
    <ligand>
        <name>Zn(2+)</name>
        <dbReference type="ChEBI" id="CHEBI:29105"/>
        <label>2</label>
    </ligand>
</feature>
<feature type="binding site" evidence="4">
    <location>
        <position position="262"/>
    </location>
    <ligand>
        <name>Zn(2+)</name>
        <dbReference type="ChEBI" id="CHEBI:29105"/>
        <label>2</label>
    </ligand>
</feature>
<feature type="helix" evidence="10">
    <location>
        <begin position="440"/>
        <end position="442"/>
    </location>
</feature>
<feature type="strand" evidence="10">
    <location>
        <begin position="444"/>
        <end position="447"/>
    </location>
</feature>
<feature type="helix" evidence="10">
    <location>
        <begin position="448"/>
        <end position="450"/>
    </location>
</feature>
<feature type="strand" evidence="10">
    <location>
        <begin position="452"/>
        <end position="454"/>
    </location>
</feature>
<feature type="strand" evidence="10">
    <location>
        <begin position="459"/>
        <end position="464"/>
    </location>
</feature>
<feature type="strand" evidence="10">
    <location>
        <begin position="480"/>
        <end position="485"/>
    </location>
</feature>
<feature type="strand" evidence="9">
    <location>
        <begin position="491"/>
        <end position="493"/>
    </location>
</feature>
<feature type="strand" evidence="10">
    <location>
        <begin position="494"/>
        <end position="498"/>
    </location>
</feature>
<feature type="strand" evidence="10">
    <location>
        <begin position="500"/>
        <end position="508"/>
    </location>
</feature>
<feature type="strand" evidence="10">
    <location>
        <begin position="514"/>
        <end position="522"/>
    </location>
</feature>
<feature type="strand" evidence="10">
    <location>
        <begin position="531"/>
        <end position="537"/>
    </location>
</feature>
<feature type="turn" evidence="10">
    <location>
        <begin position="543"/>
        <end position="546"/>
    </location>
</feature>
<feature type="strand" evidence="10">
    <location>
        <begin position="549"/>
        <end position="553"/>
    </location>
</feature>
<feature type="strand" evidence="10">
    <location>
        <begin position="555"/>
        <end position="558"/>
    </location>
</feature>
<feature type="strand" evidence="10">
    <location>
        <begin position="562"/>
        <end position="564"/>
    </location>
</feature>
<feature type="strand" evidence="10">
    <location>
        <begin position="568"/>
        <end position="570"/>
    </location>
</feature>
<feature type="strand" evidence="10">
    <location>
        <begin position="576"/>
        <end position="580"/>
    </location>
</feature>
<feature type="helix" evidence="10">
    <location>
        <begin position="581"/>
        <end position="583"/>
    </location>
</feature>
<feature type="strand" evidence="10">
    <location>
        <begin position="585"/>
        <end position="589"/>
    </location>
</feature>
<feature type="strand" evidence="10">
    <location>
        <begin position="595"/>
        <end position="599"/>
    </location>
</feature>
<feature type="strand" evidence="10">
    <location>
        <begin position="602"/>
        <end position="605"/>
    </location>
</feature>
<feature type="strand" evidence="10">
    <location>
        <begin position="609"/>
        <end position="617"/>
    </location>
</feature>
<feature type="strand" evidence="10">
    <location>
        <begin position="623"/>
        <end position="627"/>
    </location>
</feature>
<feature type="helix" evidence="10">
    <location>
        <begin position="628"/>
        <end position="630"/>
    </location>
</feature>
<feature type="strand" evidence="10">
    <location>
        <begin position="632"/>
        <end position="636"/>
    </location>
</feature>
<feature type="strand" evidence="10">
    <location>
        <begin position="642"/>
        <end position="646"/>
    </location>
</feature>
<feature type="strand" evidence="10">
    <location>
        <begin position="649"/>
        <end position="652"/>
    </location>
</feature>
<feature type="strand" evidence="10">
    <location>
        <begin position="656"/>
        <end position="664"/>
    </location>
</feature>
<feature type="strand" evidence="10">
    <location>
        <begin position="670"/>
        <end position="674"/>
    </location>
</feature>
<feature type="helix" evidence="10">
    <location>
        <begin position="675"/>
        <end position="677"/>
    </location>
</feature>
<feature type="strand" evidence="10">
    <location>
        <begin position="679"/>
        <end position="683"/>
    </location>
</feature>
<feature type="strand" evidence="10">
    <location>
        <begin position="689"/>
        <end position="694"/>
    </location>
</feature>
<feature type="helix" evidence="10">
    <location>
        <begin position="697"/>
        <end position="703"/>
    </location>
</feature>
<feature type="strand" evidence="10">
    <location>
        <begin position="706"/>
        <end position="711"/>
    </location>
</feature>
<feature type="strand" evidence="10">
    <location>
        <begin position="717"/>
        <end position="721"/>
    </location>
</feature>
<feature type="turn" evidence="10">
    <location>
        <begin position="722"/>
        <end position="725"/>
    </location>
</feature>
<feature type="strand" evidence="10">
    <location>
        <begin position="726"/>
        <end position="730"/>
    </location>
</feature>
<feature type="strand" evidence="10">
    <location>
        <begin position="737"/>
        <end position="740"/>
    </location>
</feature>
<feature type="strand" evidence="10">
    <location>
        <begin position="742"/>
        <end position="746"/>
    </location>
</feature>
<feature type="strand" evidence="10">
    <location>
        <begin position="749"/>
        <end position="758"/>
    </location>
</feature>
<feature type="strand" evidence="10">
    <location>
        <begin position="764"/>
        <end position="768"/>
    </location>
</feature>
<feature type="helix" evidence="10">
    <location>
        <begin position="769"/>
        <end position="771"/>
    </location>
</feature>
<feature type="strand" evidence="10">
    <location>
        <begin position="773"/>
        <end position="777"/>
    </location>
</feature>
<feature type="strand" evidence="10">
    <location>
        <begin position="783"/>
        <end position="787"/>
    </location>
</feature>
<feature type="strand" evidence="10">
    <location>
        <begin position="789"/>
        <end position="793"/>
    </location>
</feature>
<feature type="strand" evidence="10">
    <location>
        <begin position="796"/>
        <end position="805"/>
    </location>
</feature>
<feature type="strand" evidence="10">
    <location>
        <begin position="811"/>
        <end position="815"/>
    </location>
</feature>
<feature type="helix" evidence="10">
    <location>
        <begin position="816"/>
        <end position="818"/>
    </location>
</feature>
<feature type="strand" evidence="10">
    <location>
        <begin position="820"/>
        <end position="823"/>
    </location>
</feature>
<dbReference type="EC" id="2.3.2.27"/>
<dbReference type="EMBL" id="BX511173">
    <property type="status" value="NOT_ANNOTATED_CDS"/>
    <property type="molecule type" value="Genomic_DNA"/>
</dbReference>
<dbReference type="EMBL" id="CABZ01061336">
    <property type="status" value="NOT_ANNOTATED_CDS"/>
    <property type="molecule type" value="Genomic_DNA"/>
</dbReference>
<dbReference type="EMBL" id="CABZ01061337">
    <property type="status" value="NOT_ANNOTATED_CDS"/>
    <property type="molecule type" value="Genomic_DNA"/>
</dbReference>
<dbReference type="PDB" id="6FPT">
    <property type="method" value="X-ray"/>
    <property type="resolution" value="2.60 A"/>
    <property type="chains" value="A/B=435-824"/>
</dbReference>
<dbReference type="PDB" id="6FQ3">
    <property type="method" value="X-ray"/>
    <property type="resolution" value="1.90 A"/>
    <property type="chains" value="A=435-824"/>
</dbReference>
<dbReference type="PDB" id="6FQL">
    <property type="method" value="X-ray"/>
    <property type="resolution" value="2.35 A"/>
    <property type="chains" value="A=435-824"/>
</dbReference>
<dbReference type="PDBsum" id="6FPT"/>
<dbReference type="PDBsum" id="6FQ3"/>
<dbReference type="PDBsum" id="6FQL"/>
<dbReference type="SMR" id="E7FAM5"/>
<dbReference type="FunCoup" id="E7FAM5">
    <property type="interactions" value="784"/>
</dbReference>
<dbReference type="STRING" id="7955.ENSDARP00000101787"/>
<dbReference type="PaxDb" id="7955-ENSDARP00000101787"/>
<dbReference type="PeptideAtlas" id="E7FAM5"/>
<dbReference type="Ensembl" id="ENSDART00000113483">
    <property type="protein sequence ID" value="ENSDARP00000101787"/>
    <property type="gene ID" value="ENSDARG00000075593"/>
</dbReference>
<dbReference type="eggNOG" id="KOG2177">
    <property type="taxonomic scope" value="Eukaryota"/>
</dbReference>
<dbReference type="InParanoid" id="E7FAM5"/>
<dbReference type="OMA" id="WKQFDSP"/>
<dbReference type="OrthoDB" id="342730at2759"/>
<dbReference type="PhylomeDB" id="E7FAM5"/>
<dbReference type="TreeFam" id="TF331018"/>
<dbReference type="Reactome" id="R-DRE-983168">
    <property type="pathway name" value="Antigen processing: Ubiquitination &amp; Proteasome degradation"/>
</dbReference>
<dbReference type="UniPathway" id="UPA00143"/>
<dbReference type="PRO" id="PR:E7FAM5"/>
<dbReference type="Proteomes" id="UP000000437">
    <property type="component" value="Unplaced"/>
</dbReference>
<dbReference type="Bgee" id="ENSDARG00000075593">
    <property type="expression patterns" value="Expressed in tail bud paraxial mesoderm and 47 other cell types or tissues"/>
</dbReference>
<dbReference type="GO" id="GO:0000932">
    <property type="term" value="C:P-body"/>
    <property type="evidence" value="ECO:0000250"/>
    <property type="project" value="UniProtKB"/>
</dbReference>
<dbReference type="GO" id="GO:0035198">
    <property type="term" value="F:miRNA binding"/>
    <property type="evidence" value="ECO:0000250"/>
    <property type="project" value="UniProtKB"/>
</dbReference>
<dbReference type="GO" id="GO:0004842">
    <property type="term" value="F:ubiquitin-protein transferase activity"/>
    <property type="evidence" value="ECO:0000250"/>
    <property type="project" value="UniProtKB"/>
</dbReference>
<dbReference type="GO" id="GO:0008270">
    <property type="term" value="F:zinc ion binding"/>
    <property type="evidence" value="ECO:0007669"/>
    <property type="project" value="UniProtKB-KW"/>
</dbReference>
<dbReference type="GO" id="GO:0008543">
    <property type="term" value="P:fibroblast growth factor receptor signaling pathway"/>
    <property type="evidence" value="ECO:0000250"/>
    <property type="project" value="UniProtKB"/>
</dbReference>
<dbReference type="GO" id="GO:0000082">
    <property type="term" value="P:G1/S transition of mitotic cell cycle"/>
    <property type="evidence" value="ECO:0000250"/>
    <property type="project" value="UniProtKB"/>
</dbReference>
<dbReference type="GO" id="GO:0035278">
    <property type="term" value="P:miRNA-mediated gene silencing by inhibition of translation"/>
    <property type="evidence" value="ECO:0000250"/>
    <property type="project" value="UniProtKB"/>
</dbReference>
<dbReference type="GO" id="GO:0021915">
    <property type="term" value="P:neural tube development"/>
    <property type="evidence" value="ECO:0000250"/>
    <property type="project" value="UniProtKB"/>
</dbReference>
<dbReference type="GO" id="GO:0051865">
    <property type="term" value="P:protein autoubiquitination"/>
    <property type="evidence" value="ECO:0000250"/>
    <property type="project" value="UniProtKB"/>
</dbReference>
<dbReference type="GO" id="GO:2000177">
    <property type="term" value="P:regulation of neural precursor cell proliferation"/>
    <property type="evidence" value="ECO:0000250"/>
    <property type="project" value="UniProtKB"/>
</dbReference>
<dbReference type="GO" id="GO:0072089">
    <property type="term" value="P:stem cell proliferation"/>
    <property type="evidence" value="ECO:0000250"/>
    <property type="project" value="UniProtKB"/>
</dbReference>
<dbReference type="CDD" id="cd19812">
    <property type="entry name" value="Bbox1_TRIM71_C-VII"/>
    <property type="match status" value="1"/>
</dbReference>
<dbReference type="CDD" id="cd19796">
    <property type="entry name" value="Bbox2_TRIM71_C-VII"/>
    <property type="match status" value="1"/>
</dbReference>
<dbReference type="CDD" id="cd14954">
    <property type="entry name" value="NHL_TRIM71_like"/>
    <property type="match status" value="1"/>
</dbReference>
<dbReference type="CDD" id="cd16589">
    <property type="entry name" value="RING-HC_TRIM71_C-VII"/>
    <property type="match status" value="1"/>
</dbReference>
<dbReference type="FunFam" id="2.120.10.30:FF:000013">
    <property type="entry name" value="E3 ubiquitin-protein ligase TRIM71"/>
    <property type="match status" value="1"/>
</dbReference>
<dbReference type="FunFam" id="2.120.10.30:FF:000025">
    <property type="entry name" value="E3 ubiquitin-protein ligase TRIM71"/>
    <property type="match status" value="1"/>
</dbReference>
<dbReference type="FunFam" id="2.120.10.30:FF:000080">
    <property type="entry name" value="E3 ubiquitin-protein ligase TRIM71"/>
    <property type="match status" value="1"/>
</dbReference>
<dbReference type="FunFam" id="2.60.40.10:FF:000527">
    <property type="entry name" value="E3 ubiquitin-protein ligase TRIM71"/>
    <property type="match status" value="1"/>
</dbReference>
<dbReference type="FunFam" id="3.30.160.60:FF:000923">
    <property type="entry name" value="E3 ubiquitin-protein ligase TRIM71"/>
    <property type="match status" value="1"/>
</dbReference>
<dbReference type="FunFam" id="3.30.40.10:FF:000435">
    <property type="entry name" value="Tripartite motif containing 71, E3 ubiquitin protein ligase"/>
    <property type="match status" value="1"/>
</dbReference>
<dbReference type="Gene3D" id="4.10.830.40">
    <property type="match status" value="1"/>
</dbReference>
<dbReference type="Gene3D" id="3.30.160.60">
    <property type="entry name" value="Classic Zinc Finger"/>
    <property type="match status" value="1"/>
</dbReference>
<dbReference type="Gene3D" id="2.60.40.10">
    <property type="entry name" value="Immunoglobulins"/>
    <property type="match status" value="1"/>
</dbReference>
<dbReference type="Gene3D" id="2.120.10.30">
    <property type="entry name" value="TolB, C-terminal domain"/>
    <property type="match status" value="3"/>
</dbReference>
<dbReference type="Gene3D" id="3.30.40.10">
    <property type="entry name" value="Zinc/RING finger domain, C3HC4 (zinc finger)"/>
    <property type="match status" value="1"/>
</dbReference>
<dbReference type="InterPro" id="IPR011042">
    <property type="entry name" value="6-blade_b-propeller_TolB-like"/>
</dbReference>
<dbReference type="InterPro" id="IPR017868">
    <property type="entry name" value="Filamin/ABP280_repeat-like"/>
</dbReference>
<dbReference type="InterPro" id="IPR001298">
    <property type="entry name" value="Filamin/ABP280_rpt"/>
</dbReference>
<dbReference type="InterPro" id="IPR013783">
    <property type="entry name" value="Ig-like_fold"/>
</dbReference>
<dbReference type="InterPro" id="IPR014756">
    <property type="entry name" value="Ig_E-set"/>
</dbReference>
<dbReference type="InterPro" id="IPR001258">
    <property type="entry name" value="NHL_repeat"/>
</dbReference>
<dbReference type="InterPro" id="IPR050952">
    <property type="entry name" value="TRIM-NHL_E3_ligases"/>
</dbReference>
<dbReference type="InterPro" id="IPR000315">
    <property type="entry name" value="Znf_B-box"/>
</dbReference>
<dbReference type="InterPro" id="IPR001841">
    <property type="entry name" value="Znf_RING"/>
</dbReference>
<dbReference type="InterPro" id="IPR013083">
    <property type="entry name" value="Znf_RING/FYVE/PHD"/>
</dbReference>
<dbReference type="InterPro" id="IPR017907">
    <property type="entry name" value="Znf_RING_CS"/>
</dbReference>
<dbReference type="PANTHER" id="PTHR24104">
    <property type="entry name" value="E3 UBIQUITIN-PROTEIN LIGASE NHLRC1-RELATED"/>
    <property type="match status" value="1"/>
</dbReference>
<dbReference type="PANTHER" id="PTHR24104:SF25">
    <property type="entry name" value="PROTEIN LIN-41"/>
    <property type="match status" value="1"/>
</dbReference>
<dbReference type="Pfam" id="PF00630">
    <property type="entry name" value="Filamin"/>
    <property type="match status" value="1"/>
</dbReference>
<dbReference type="Pfam" id="PF01436">
    <property type="entry name" value="NHL"/>
    <property type="match status" value="6"/>
</dbReference>
<dbReference type="Pfam" id="PF00643">
    <property type="entry name" value="zf-B_box"/>
    <property type="match status" value="2"/>
</dbReference>
<dbReference type="SMART" id="SM00336">
    <property type="entry name" value="BBOX"/>
    <property type="match status" value="2"/>
</dbReference>
<dbReference type="SMART" id="SM00557">
    <property type="entry name" value="IG_FLMN"/>
    <property type="match status" value="1"/>
</dbReference>
<dbReference type="SMART" id="SM00184">
    <property type="entry name" value="RING"/>
    <property type="match status" value="1"/>
</dbReference>
<dbReference type="SUPFAM" id="SSF57845">
    <property type="entry name" value="B-box zinc-binding domain"/>
    <property type="match status" value="1"/>
</dbReference>
<dbReference type="SUPFAM" id="SSF81296">
    <property type="entry name" value="E set domains"/>
    <property type="match status" value="1"/>
</dbReference>
<dbReference type="SUPFAM" id="SSF101898">
    <property type="entry name" value="NHL repeat"/>
    <property type="match status" value="1"/>
</dbReference>
<dbReference type="SUPFAM" id="SSF57850">
    <property type="entry name" value="RING/U-box"/>
    <property type="match status" value="1"/>
</dbReference>
<dbReference type="PROSITE" id="PS50194">
    <property type="entry name" value="FILAMIN_REPEAT"/>
    <property type="match status" value="1"/>
</dbReference>
<dbReference type="PROSITE" id="PS51125">
    <property type="entry name" value="NHL"/>
    <property type="match status" value="6"/>
</dbReference>
<dbReference type="PROSITE" id="PS50119">
    <property type="entry name" value="ZF_BBOX"/>
    <property type="match status" value="2"/>
</dbReference>
<dbReference type="PROSITE" id="PS00518">
    <property type="entry name" value="ZF_RING_1"/>
    <property type="match status" value="1"/>
</dbReference>
<dbReference type="PROSITE" id="PS50089">
    <property type="entry name" value="ZF_RING_2"/>
    <property type="match status" value="1"/>
</dbReference>
<sequence length="824" mass="90678">MCEVILWSSAQMASFPDSDLQTCPLCKELCGCSAPISSNSSTSSSSSQTSNSSSTSSTRRLHVLPCLHAFCRQCLEGQRSPGDPLKLRCPTCDQKVSLSESGVDALPSSNFLFSNLLDVVVSAEEQGKNGRSSAVVHHGGLLRPQHLSDPQCSSCDEGNPATSHCLDCQEYLCDNCVRAHQRVRLTKDHFIEGLLESLHLANRTNNSNTPVSISQSFHNSFSMLNVFQERMDFCQHHDDAVLRFFCDSCTVPICRECSLGRHAGHSFTYLQDALQDSRALTIQLLADAQQGRQAIQLSIEKAQAIAEQVELKAKVVQSEVKTITLRHKKALEERECELLWKVEKIRQVKAKSLYLQVEKLHQNLTKLDSTIATVTQVLEEGRSIDVLLAREHMLNQLQELKSLRCILQPQEDDRIMFTPPDQALLIAIKSLGLISSGAFATASKAHGEGIKRALQGKPASFTVVGYDHDGEPRLSGGDSVSVVLMSPDGNLSSAEVSDHQDGTYTVSYLPKGEGEHLLSVLICNQHIEGSPFKVMVKSGRSYGGVGLPMASFGGEGDGDGQLCRPWGICVDKEGYVVVADRSNNRVQIFKPCGTFHHKFGTLGSRPGQFDRPAGVACDSQRRIIVADKDNHRIQIFTFDGQFLLKFGEKGTKNGQFNYPWDVAVNFEGKILVSDTRNHRVQLFGPDGTFLNKYGFEGALWKHFDSPRGVAFNQEGHLVVTDFNNHRLLVIRPDCQSARFLGSEGTGNGQFLRPQGVAVDQEDRIIVADSRNHRIQVFEPNGNFLCKFGTHGNGFGQMDRPSGIAVTPDGVIVAVDFGNNRILMF</sequence>
<comment type="function">
    <text evidence="1">E3 ubiquitin-protein ligase that cooperates with the microRNAs (miRNAs) machinery and promotes embryonic stem cells proliferation and maintenance. Binds to miRNAs and participates in post-transcriptional repression of transcripts. Required to maintain proliferation and prevent premature differentiation of neural progenitor cells during early neural development.</text>
</comment>
<comment type="catalytic activity">
    <reaction>
        <text>S-ubiquitinyl-[E2 ubiquitin-conjugating enzyme]-L-cysteine + [acceptor protein]-L-lysine = [E2 ubiquitin-conjugating enzyme]-L-cysteine + N(6)-ubiquitinyl-[acceptor protein]-L-lysine.</text>
        <dbReference type="EC" id="2.3.2.27"/>
    </reaction>
</comment>
<comment type="pathway">
    <text>Protein modification; protein ubiquitination.</text>
</comment>
<comment type="subcellular location">
    <subcellularLocation>
        <location evidence="2">Cytoplasm</location>
        <location evidence="2">P-body</location>
    </subcellularLocation>
</comment>
<comment type="induction">
    <text evidence="7">Negatively regulated by the microRNA (miRNA) let-7 which causes degradation of the mRNA encoding this protein. This requires a let-7 complementary site (LCS) in the 3'-UTR of the mRNA encoding this protein.</text>
</comment>
<comment type="domain">
    <text evidence="2">The NHL domain, containing the 6 NHL repeats, is necessary and sufficient to target RNA but not to repress mRNA. The minimal region needed to execute repression consists of the coiled coil domain and the Filamin repeat. The RING-type domain is dispensable for mRNA repression.</text>
</comment>
<comment type="disruption phenotype">
    <text evidence="7">Severe developmental defects.</text>
</comment>
<comment type="similarity">
    <text evidence="8">Belongs to the TRIM/RBCC family.</text>
</comment>
<proteinExistence type="evidence at protein level"/>
<accession>E7FAM5</accession>
<accession>F8W380</accession>
<name>LIN41_DANRE</name>
<reference key="1">
    <citation type="journal article" date="2013" name="Nature">
        <title>The zebrafish reference genome sequence and its relationship to the human genome.</title>
        <authorList>
            <person name="Howe K."/>
            <person name="Clark M.D."/>
            <person name="Torroja C.F."/>
            <person name="Torrance J."/>
            <person name="Berthelot C."/>
            <person name="Muffato M."/>
            <person name="Collins J.E."/>
            <person name="Humphray S."/>
            <person name="McLaren K."/>
            <person name="Matthews L."/>
            <person name="McLaren S."/>
            <person name="Sealy I."/>
            <person name="Caccamo M."/>
            <person name="Churcher C."/>
            <person name="Scott C."/>
            <person name="Barrett J.C."/>
            <person name="Koch R."/>
            <person name="Rauch G.J."/>
            <person name="White S."/>
            <person name="Chow W."/>
            <person name="Kilian B."/>
            <person name="Quintais L.T."/>
            <person name="Guerra-Assuncao J.A."/>
            <person name="Zhou Y."/>
            <person name="Gu Y."/>
            <person name="Yen J."/>
            <person name="Vogel J.H."/>
            <person name="Eyre T."/>
            <person name="Redmond S."/>
            <person name="Banerjee R."/>
            <person name="Chi J."/>
            <person name="Fu B."/>
            <person name="Langley E."/>
            <person name="Maguire S.F."/>
            <person name="Laird G.K."/>
            <person name="Lloyd D."/>
            <person name="Kenyon E."/>
            <person name="Donaldson S."/>
            <person name="Sehra H."/>
            <person name="Almeida-King J."/>
            <person name="Loveland J."/>
            <person name="Trevanion S."/>
            <person name="Jones M."/>
            <person name="Quail M."/>
            <person name="Willey D."/>
            <person name="Hunt A."/>
            <person name="Burton J."/>
            <person name="Sims S."/>
            <person name="McLay K."/>
            <person name="Plumb B."/>
            <person name="Davis J."/>
            <person name="Clee C."/>
            <person name="Oliver K."/>
            <person name="Clark R."/>
            <person name="Riddle C."/>
            <person name="Elliot D."/>
            <person name="Threadgold G."/>
            <person name="Harden G."/>
            <person name="Ware D."/>
            <person name="Begum S."/>
            <person name="Mortimore B."/>
            <person name="Kerry G."/>
            <person name="Heath P."/>
            <person name="Phillimore B."/>
            <person name="Tracey A."/>
            <person name="Corby N."/>
            <person name="Dunn M."/>
            <person name="Johnson C."/>
            <person name="Wood J."/>
            <person name="Clark S."/>
            <person name="Pelan S."/>
            <person name="Griffiths G."/>
            <person name="Smith M."/>
            <person name="Glithero R."/>
            <person name="Howden P."/>
            <person name="Barker N."/>
            <person name="Lloyd C."/>
            <person name="Stevens C."/>
            <person name="Harley J."/>
            <person name="Holt K."/>
            <person name="Panagiotidis G."/>
            <person name="Lovell J."/>
            <person name="Beasley H."/>
            <person name="Henderson C."/>
            <person name="Gordon D."/>
            <person name="Auger K."/>
            <person name="Wright D."/>
            <person name="Collins J."/>
            <person name="Raisen C."/>
            <person name="Dyer L."/>
            <person name="Leung K."/>
            <person name="Robertson L."/>
            <person name="Ambridge K."/>
            <person name="Leongamornlert D."/>
            <person name="McGuire S."/>
            <person name="Gilderthorp R."/>
            <person name="Griffiths C."/>
            <person name="Manthravadi D."/>
            <person name="Nichol S."/>
            <person name="Barker G."/>
            <person name="Whitehead S."/>
            <person name="Kay M."/>
            <person name="Brown J."/>
            <person name="Murnane C."/>
            <person name="Gray E."/>
            <person name="Humphries M."/>
            <person name="Sycamore N."/>
            <person name="Barker D."/>
            <person name="Saunders D."/>
            <person name="Wallis J."/>
            <person name="Babbage A."/>
            <person name="Hammond S."/>
            <person name="Mashreghi-Mohammadi M."/>
            <person name="Barr L."/>
            <person name="Martin S."/>
            <person name="Wray P."/>
            <person name="Ellington A."/>
            <person name="Matthews N."/>
            <person name="Ellwood M."/>
            <person name="Woodmansey R."/>
            <person name="Clark G."/>
            <person name="Cooper J."/>
            <person name="Tromans A."/>
            <person name="Grafham D."/>
            <person name="Skuce C."/>
            <person name="Pandian R."/>
            <person name="Andrews R."/>
            <person name="Harrison E."/>
            <person name="Kimberley A."/>
            <person name="Garnett J."/>
            <person name="Fosker N."/>
            <person name="Hall R."/>
            <person name="Garner P."/>
            <person name="Kelly D."/>
            <person name="Bird C."/>
            <person name="Palmer S."/>
            <person name="Gehring I."/>
            <person name="Berger A."/>
            <person name="Dooley C.M."/>
            <person name="Ersan-Urun Z."/>
            <person name="Eser C."/>
            <person name="Geiger H."/>
            <person name="Geisler M."/>
            <person name="Karotki L."/>
            <person name="Kirn A."/>
            <person name="Konantz J."/>
            <person name="Konantz M."/>
            <person name="Oberlander M."/>
            <person name="Rudolph-Geiger S."/>
            <person name="Teucke M."/>
            <person name="Lanz C."/>
            <person name="Raddatz G."/>
            <person name="Osoegawa K."/>
            <person name="Zhu B."/>
            <person name="Rapp A."/>
            <person name="Widaa S."/>
            <person name="Langford C."/>
            <person name="Yang F."/>
            <person name="Schuster S.C."/>
            <person name="Carter N.P."/>
            <person name="Harrow J."/>
            <person name="Ning Z."/>
            <person name="Herrero J."/>
            <person name="Searle S.M."/>
            <person name="Enright A."/>
            <person name="Geisler R."/>
            <person name="Plasterk R.H."/>
            <person name="Lee C."/>
            <person name="Westerfield M."/>
            <person name="de Jong P.J."/>
            <person name="Zon L.I."/>
            <person name="Postlethwait J.H."/>
            <person name="Nusslein-Volhard C."/>
            <person name="Hubbard T.J."/>
            <person name="Roest Crollius H."/>
            <person name="Rogers J."/>
            <person name="Stemple D.L."/>
        </authorList>
    </citation>
    <scope>NUCLEOTIDE SEQUENCE [LARGE SCALE GENOMIC DNA]</scope>
    <source>
        <strain>Tuebingen</strain>
    </source>
</reference>
<reference key="2">
    <citation type="journal article" date="2007" name="Mol. Biol. Evol.">
        <title>Human TRIM71 and its nematode homologue are targets of let-7 microRNA and its zebrafish orthologue is essential for development.</title>
        <authorList>
            <person name="Lin Y.C."/>
            <person name="Hsieh L.C."/>
            <person name="Kuo M.W."/>
            <person name="Yu J."/>
            <person name="Kuo H.H."/>
            <person name="Lo W.L."/>
            <person name="Lin R.J."/>
            <person name="Yu A.L."/>
            <person name="Li W.H."/>
        </authorList>
    </citation>
    <scope>INDUCTION</scope>
    <scope>DISRUPTION PHENOTYPE</scope>
</reference>
<protein>
    <recommendedName>
        <fullName>E3 ubiquitin-protein ligase TRIM71</fullName>
        <ecNumber>2.3.2.27</ecNumber>
    </recommendedName>
    <alternativeName>
        <fullName>Protein lin-41 homolog</fullName>
    </alternativeName>
    <alternativeName>
        <fullName evidence="8">RING-type E3 ubiquitin transferase TRIM71</fullName>
    </alternativeName>
    <alternativeName>
        <fullName>Tripartite motif-containing protein 71</fullName>
    </alternativeName>
</protein>
<organism>
    <name type="scientific">Danio rerio</name>
    <name type="common">Zebrafish</name>
    <name type="synonym">Brachydanio rerio</name>
    <dbReference type="NCBI Taxonomy" id="7955"/>
    <lineage>
        <taxon>Eukaryota</taxon>
        <taxon>Metazoa</taxon>
        <taxon>Chordata</taxon>
        <taxon>Craniata</taxon>
        <taxon>Vertebrata</taxon>
        <taxon>Euteleostomi</taxon>
        <taxon>Actinopterygii</taxon>
        <taxon>Neopterygii</taxon>
        <taxon>Teleostei</taxon>
        <taxon>Ostariophysi</taxon>
        <taxon>Cypriniformes</taxon>
        <taxon>Danionidae</taxon>
        <taxon>Danioninae</taxon>
        <taxon>Danio</taxon>
    </lineage>
</organism>
<keyword id="KW-0002">3D-structure</keyword>
<keyword id="KW-0175">Coiled coil</keyword>
<keyword id="KW-0963">Cytoplasm</keyword>
<keyword id="KW-0217">Developmental protein</keyword>
<keyword id="KW-0479">Metal-binding</keyword>
<keyword id="KW-1185">Reference proteome</keyword>
<keyword id="KW-0677">Repeat</keyword>
<keyword id="KW-0694">RNA-binding</keyword>
<keyword id="KW-0943">RNA-mediated gene silencing</keyword>
<keyword id="KW-0808">Transferase</keyword>
<keyword id="KW-0833">Ubl conjugation pathway</keyword>
<keyword id="KW-0862">Zinc</keyword>
<keyword id="KW-0863">Zinc-finger</keyword>
<evidence type="ECO:0000250" key="1">
    <source>
        <dbReference type="UniProtKB" id="Q1PSW8"/>
    </source>
</evidence>
<evidence type="ECO:0000250" key="2">
    <source>
        <dbReference type="UniProtKB" id="Q2Q1W2"/>
    </source>
</evidence>
<evidence type="ECO:0000255" key="3"/>
<evidence type="ECO:0000255" key="4">
    <source>
        <dbReference type="PROSITE-ProRule" id="PRU00024"/>
    </source>
</evidence>
<evidence type="ECO:0000255" key="5">
    <source>
        <dbReference type="PROSITE-ProRule" id="PRU00175"/>
    </source>
</evidence>
<evidence type="ECO:0000256" key="6">
    <source>
        <dbReference type="SAM" id="MobiDB-lite"/>
    </source>
</evidence>
<evidence type="ECO:0000269" key="7">
    <source>
    </source>
</evidence>
<evidence type="ECO:0000305" key="8"/>
<evidence type="ECO:0007829" key="9">
    <source>
        <dbReference type="PDB" id="6FPT"/>
    </source>
</evidence>
<evidence type="ECO:0007829" key="10">
    <source>
        <dbReference type="PDB" id="6FQ3"/>
    </source>
</evidence>
<gene>
    <name type="primary">trim71</name>
    <name type="synonym">lin41</name>
</gene>